<comment type="function">
    <text evidence="1">Component of the ribosome, a large ribonucleoprotein complex responsible for the synthesis of proteins in the cell. The small ribosomal subunit (SSU) binds messenger RNAs (mRNAs) and translates the encoded message by selecting cognate aminoacyl-transfer RNA (tRNA) molecules. The large subunit (LSU) contains the ribosomal catalytic site termed the peptidyl transferase center (PTC), which catalyzes the formation of peptide bonds, thereby polymerizing the amino acids delivered by tRNAs into a polypeptide chain. The nascent polypeptides leave the ribosome through a tunnel in the LSU and interact with protein factors that function in enzymatic processing, targeting, and the membrane insertion of nascent chains at the exit of the ribosomal tunnel.</text>
</comment>
<comment type="subunit">
    <text evidence="1">Component of the large ribosomal subunit (LSU). Mature yeast ribosomes consist of a small (40S) and a large (60S) subunit. The 40S small subunit contains 1 molecule of ribosomal RNA (18S rRNA) and at least 33 different proteins. The large 60S subunit contains 3 rRNA molecules (25S, 5.8S and 5S rRNA) and at least 46 different proteins.</text>
</comment>
<comment type="subcellular location">
    <subcellularLocation>
        <location evidence="2">Cytoplasm</location>
    </subcellularLocation>
    <subcellularLocation>
        <location evidence="2">Nucleus</location>
        <location evidence="2">Nucleolus</location>
    </subcellularLocation>
</comment>
<comment type="miscellaneous">
    <text>There are 2 genes for eL32 in S.pombe.</text>
</comment>
<comment type="similarity">
    <text evidence="3">Belongs to the eukaryotic ribosomal protein eL32 family.</text>
</comment>
<proteinExistence type="inferred from homology"/>
<dbReference type="EMBL" id="CU329671">
    <property type="protein sequence ID" value="CAA16918.1"/>
    <property type="molecule type" value="Genomic_DNA"/>
</dbReference>
<dbReference type="PIR" id="T39562">
    <property type="entry name" value="T39562"/>
</dbReference>
<dbReference type="RefSeq" id="NP_596809.1">
    <property type="nucleotide sequence ID" value="NM_001023830.2"/>
</dbReference>
<dbReference type="SMR" id="O42935"/>
<dbReference type="BioGRID" id="276672">
    <property type="interactions" value="9"/>
</dbReference>
<dbReference type="FunCoup" id="O42935">
    <property type="interactions" value="572"/>
</dbReference>
<dbReference type="STRING" id="284812.O42935"/>
<dbReference type="iPTMnet" id="O42935"/>
<dbReference type="PaxDb" id="4896-SPBC16C6.11.1"/>
<dbReference type="EnsemblFungi" id="SPBC16C6.11.1">
    <property type="protein sequence ID" value="SPBC16C6.11.1:pep"/>
    <property type="gene ID" value="SPBC16C6.11"/>
</dbReference>
<dbReference type="GeneID" id="2540135"/>
<dbReference type="KEGG" id="spo:2540135"/>
<dbReference type="PomBase" id="SPBC16C6.11">
    <property type="gene designation" value="rpl3201"/>
</dbReference>
<dbReference type="VEuPathDB" id="FungiDB:SPBC16C6.11"/>
<dbReference type="eggNOG" id="KOG0878">
    <property type="taxonomic scope" value="Eukaryota"/>
</dbReference>
<dbReference type="HOGENOM" id="CLU_071479_4_1_1"/>
<dbReference type="InParanoid" id="O42935"/>
<dbReference type="OMA" id="GPHNTAK"/>
<dbReference type="PhylomeDB" id="O42935"/>
<dbReference type="Reactome" id="R-SPO-156827">
    <property type="pathway name" value="L13a-mediated translational silencing of Ceruloplasmin expression"/>
</dbReference>
<dbReference type="Reactome" id="R-SPO-1799339">
    <property type="pathway name" value="SRP-dependent cotranslational protein targeting to membrane"/>
</dbReference>
<dbReference type="Reactome" id="R-SPO-72689">
    <property type="pathway name" value="Formation of a pool of free 40S subunits"/>
</dbReference>
<dbReference type="Reactome" id="R-SPO-72706">
    <property type="pathway name" value="GTP hydrolysis and joining of the 60S ribosomal subunit"/>
</dbReference>
<dbReference type="Reactome" id="R-SPO-975956">
    <property type="pathway name" value="Nonsense Mediated Decay (NMD) independent of the Exon Junction Complex (EJC)"/>
</dbReference>
<dbReference type="Reactome" id="R-SPO-975957">
    <property type="pathway name" value="Nonsense Mediated Decay (NMD) enhanced by the Exon Junction Complex (EJC)"/>
</dbReference>
<dbReference type="PRO" id="PR:O42935"/>
<dbReference type="Proteomes" id="UP000002485">
    <property type="component" value="Chromosome II"/>
</dbReference>
<dbReference type="GO" id="GO:0005829">
    <property type="term" value="C:cytosol"/>
    <property type="evidence" value="ECO:0007005"/>
    <property type="project" value="PomBase"/>
</dbReference>
<dbReference type="GO" id="GO:0022625">
    <property type="term" value="C:cytosolic large ribosomal subunit"/>
    <property type="evidence" value="ECO:0000318"/>
    <property type="project" value="GO_Central"/>
</dbReference>
<dbReference type="GO" id="GO:0005730">
    <property type="term" value="C:nucleolus"/>
    <property type="evidence" value="ECO:0007005"/>
    <property type="project" value="PomBase"/>
</dbReference>
<dbReference type="GO" id="GO:0030684">
    <property type="term" value="C:preribosome"/>
    <property type="evidence" value="ECO:0000314"/>
    <property type="project" value="PomBase"/>
</dbReference>
<dbReference type="GO" id="GO:0003735">
    <property type="term" value="F:structural constituent of ribosome"/>
    <property type="evidence" value="ECO:0000266"/>
    <property type="project" value="PomBase"/>
</dbReference>
<dbReference type="GO" id="GO:0002181">
    <property type="term" value="P:cytoplasmic translation"/>
    <property type="evidence" value="ECO:0000266"/>
    <property type="project" value="PomBase"/>
</dbReference>
<dbReference type="CDD" id="cd00513">
    <property type="entry name" value="Ribosomal_L32_L32e"/>
    <property type="match status" value="1"/>
</dbReference>
<dbReference type="InterPro" id="IPR001515">
    <property type="entry name" value="Ribosomal_eL32"/>
</dbReference>
<dbReference type="InterPro" id="IPR018263">
    <property type="entry name" value="Ribosomal_eL32_CS"/>
</dbReference>
<dbReference type="InterPro" id="IPR036351">
    <property type="entry name" value="Ribosomal_eL32_sf"/>
</dbReference>
<dbReference type="PANTHER" id="PTHR23413">
    <property type="entry name" value="60S RIBOSOMAL PROTEIN L32 AND DNA-DIRECTED RNA POLYMERASE II, SUBUNIT N"/>
    <property type="match status" value="1"/>
</dbReference>
<dbReference type="PANTHER" id="PTHR23413:SF1">
    <property type="entry name" value="RIBOSOMAL PROTEIN L32"/>
    <property type="match status" value="1"/>
</dbReference>
<dbReference type="Pfam" id="PF01655">
    <property type="entry name" value="Ribosomal_L32e"/>
    <property type="match status" value="1"/>
</dbReference>
<dbReference type="SMART" id="SM01393">
    <property type="entry name" value="Ribosomal_L32e"/>
    <property type="match status" value="1"/>
</dbReference>
<dbReference type="SUPFAM" id="SSF52042">
    <property type="entry name" value="Ribosomal protein L32e"/>
    <property type="match status" value="1"/>
</dbReference>
<dbReference type="PROSITE" id="PS00580">
    <property type="entry name" value="RIBOSOMAL_L32E"/>
    <property type="match status" value="1"/>
</dbReference>
<evidence type="ECO:0000250" key="1">
    <source>
        <dbReference type="UniProtKB" id="P38061"/>
    </source>
</evidence>
<evidence type="ECO:0000269" key="2">
    <source>
    </source>
</evidence>
<evidence type="ECO:0000305" key="3"/>
<reference key="1">
    <citation type="journal article" date="2002" name="Nature">
        <title>The genome sequence of Schizosaccharomyces pombe.</title>
        <authorList>
            <person name="Wood V."/>
            <person name="Gwilliam R."/>
            <person name="Rajandream M.A."/>
            <person name="Lyne M.H."/>
            <person name="Lyne R."/>
            <person name="Stewart A."/>
            <person name="Sgouros J.G."/>
            <person name="Peat N."/>
            <person name="Hayles J."/>
            <person name="Baker S.G."/>
            <person name="Basham D."/>
            <person name="Bowman S."/>
            <person name="Brooks K."/>
            <person name="Brown D."/>
            <person name="Brown S."/>
            <person name="Chillingworth T."/>
            <person name="Churcher C.M."/>
            <person name="Collins M."/>
            <person name="Connor R."/>
            <person name="Cronin A."/>
            <person name="Davis P."/>
            <person name="Feltwell T."/>
            <person name="Fraser A."/>
            <person name="Gentles S."/>
            <person name="Goble A."/>
            <person name="Hamlin N."/>
            <person name="Harris D.E."/>
            <person name="Hidalgo J."/>
            <person name="Hodgson G."/>
            <person name="Holroyd S."/>
            <person name="Hornsby T."/>
            <person name="Howarth S."/>
            <person name="Huckle E.J."/>
            <person name="Hunt S."/>
            <person name="Jagels K."/>
            <person name="James K.D."/>
            <person name="Jones L."/>
            <person name="Jones M."/>
            <person name="Leather S."/>
            <person name="McDonald S."/>
            <person name="McLean J."/>
            <person name="Mooney P."/>
            <person name="Moule S."/>
            <person name="Mungall K.L."/>
            <person name="Murphy L.D."/>
            <person name="Niblett D."/>
            <person name="Odell C."/>
            <person name="Oliver K."/>
            <person name="O'Neil S."/>
            <person name="Pearson D."/>
            <person name="Quail M.A."/>
            <person name="Rabbinowitsch E."/>
            <person name="Rutherford K.M."/>
            <person name="Rutter S."/>
            <person name="Saunders D."/>
            <person name="Seeger K."/>
            <person name="Sharp S."/>
            <person name="Skelton J."/>
            <person name="Simmonds M.N."/>
            <person name="Squares R."/>
            <person name="Squares S."/>
            <person name="Stevens K."/>
            <person name="Taylor K."/>
            <person name="Taylor R.G."/>
            <person name="Tivey A."/>
            <person name="Walsh S.V."/>
            <person name="Warren T."/>
            <person name="Whitehead S."/>
            <person name="Woodward J.R."/>
            <person name="Volckaert G."/>
            <person name="Aert R."/>
            <person name="Robben J."/>
            <person name="Grymonprez B."/>
            <person name="Weltjens I."/>
            <person name="Vanstreels E."/>
            <person name="Rieger M."/>
            <person name="Schaefer M."/>
            <person name="Mueller-Auer S."/>
            <person name="Gabel C."/>
            <person name="Fuchs M."/>
            <person name="Duesterhoeft A."/>
            <person name="Fritzc C."/>
            <person name="Holzer E."/>
            <person name="Moestl D."/>
            <person name="Hilbert H."/>
            <person name="Borzym K."/>
            <person name="Langer I."/>
            <person name="Beck A."/>
            <person name="Lehrach H."/>
            <person name="Reinhardt R."/>
            <person name="Pohl T.M."/>
            <person name="Eger P."/>
            <person name="Zimmermann W."/>
            <person name="Wedler H."/>
            <person name="Wambutt R."/>
            <person name="Purnelle B."/>
            <person name="Goffeau A."/>
            <person name="Cadieu E."/>
            <person name="Dreano S."/>
            <person name="Gloux S."/>
            <person name="Lelaure V."/>
            <person name="Mottier S."/>
            <person name="Galibert F."/>
            <person name="Aves S.J."/>
            <person name="Xiang Z."/>
            <person name="Hunt C."/>
            <person name="Moore K."/>
            <person name="Hurst S.M."/>
            <person name="Lucas M."/>
            <person name="Rochet M."/>
            <person name="Gaillardin C."/>
            <person name="Tallada V.A."/>
            <person name="Garzon A."/>
            <person name="Thode G."/>
            <person name="Daga R.R."/>
            <person name="Cruzado L."/>
            <person name="Jimenez J."/>
            <person name="Sanchez M."/>
            <person name="del Rey F."/>
            <person name="Benito J."/>
            <person name="Dominguez A."/>
            <person name="Revuelta J.L."/>
            <person name="Moreno S."/>
            <person name="Armstrong J."/>
            <person name="Forsburg S.L."/>
            <person name="Cerutti L."/>
            <person name="Lowe T."/>
            <person name="McCombie W.R."/>
            <person name="Paulsen I."/>
            <person name="Potashkin J."/>
            <person name="Shpakovski G.V."/>
            <person name="Ussery D."/>
            <person name="Barrell B.G."/>
            <person name="Nurse P."/>
        </authorList>
    </citation>
    <scope>NUCLEOTIDE SEQUENCE [LARGE SCALE GENOMIC DNA]</scope>
    <source>
        <strain>972 / ATCC 24843</strain>
    </source>
</reference>
<reference key="2">
    <citation type="journal article" date="2006" name="Nat. Biotechnol.">
        <title>ORFeome cloning and global analysis of protein localization in the fission yeast Schizosaccharomyces pombe.</title>
        <authorList>
            <person name="Matsuyama A."/>
            <person name="Arai R."/>
            <person name="Yashiroda Y."/>
            <person name="Shirai A."/>
            <person name="Kamata A."/>
            <person name="Sekido S."/>
            <person name="Kobayashi Y."/>
            <person name="Hashimoto A."/>
            <person name="Hamamoto M."/>
            <person name="Hiraoka Y."/>
            <person name="Horinouchi S."/>
            <person name="Yoshida M."/>
        </authorList>
    </citation>
    <scope>SUBCELLULAR LOCATION [LARGE SCALE ANALYSIS]</scope>
</reference>
<name>RL32B_SCHPO</name>
<organism>
    <name type="scientific">Schizosaccharomyces pombe (strain 972 / ATCC 24843)</name>
    <name type="common">Fission yeast</name>
    <dbReference type="NCBI Taxonomy" id="284812"/>
    <lineage>
        <taxon>Eukaryota</taxon>
        <taxon>Fungi</taxon>
        <taxon>Dikarya</taxon>
        <taxon>Ascomycota</taxon>
        <taxon>Taphrinomycotina</taxon>
        <taxon>Schizosaccharomycetes</taxon>
        <taxon>Schizosaccharomycetales</taxon>
        <taxon>Schizosaccharomycetaceae</taxon>
        <taxon>Schizosaccharomyces</taxon>
    </lineage>
</organism>
<protein>
    <recommendedName>
        <fullName evidence="3">Large ribosomal subunit protein eL32B</fullName>
    </recommendedName>
    <alternativeName>
        <fullName>60S ribosomal protein L32-B</fullName>
    </alternativeName>
</protein>
<sequence>MAAINIVKKRTKPFKRHQSDLFKRVGESWRKPRGIDSCVRRRFRGTISMPKIGYGNNKKTRYCMPNGLKAFLVRNVSDVELLLMHNKTYAAEIASNVSARKRVEIVEKARALGVKVTNAGAKVRSQE</sequence>
<accession>O42935</accession>
<keyword id="KW-0963">Cytoplasm</keyword>
<keyword id="KW-0539">Nucleus</keyword>
<keyword id="KW-1185">Reference proteome</keyword>
<keyword id="KW-0687">Ribonucleoprotein</keyword>
<keyword id="KW-0689">Ribosomal protein</keyword>
<gene>
    <name type="primary">rpl3201</name>
    <name type="synonym">rpl32b</name>
    <name type="ORF">SPBC16C6.11</name>
</gene>
<feature type="chain" id="PRO_0000131144" description="Large ribosomal subunit protein eL32B">
    <location>
        <begin position="1"/>
        <end position="127"/>
    </location>
</feature>